<dbReference type="EMBL" id="AB007648">
    <property type="status" value="NOT_ANNOTATED_CDS"/>
    <property type="molecule type" value="Genomic_DNA"/>
</dbReference>
<dbReference type="EMBL" id="CP002688">
    <property type="status" value="NOT_ANNOTATED_CDS"/>
    <property type="molecule type" value="Genomic_DNA"/>
</dbReference>
<dbReference type="SMR" id="Q2V352"/>
<dbReference type="PaxDb" id="3702-AT5G23212.1"/>
<dbReference type="ProteomicsDB" id="224007"/>
<dbReference type="Araport" id="AT5G23212"/>
<dbReference type="TAIR" id="AT5G23212"/>
<dbReference type="eggNOG" id="ENOG502SEVK">
    <property type="taxonomic scope" value="Eukaryota"/>
</dbReference>
<dbReference type="HOGENOM" id="CLU_195514_0_0_1"/>
<dbReference type="InParanoid" id="Q2V352"/>
<dbReference type="PhylomeDB" id="Q2V352"/>
<dbReference type="PRO" id="PR:Q2V352"/>
<dbReference type="Proteomes" id="UP000006548">
    <property type="component" value="Chromosome 5"/>
</dbReference>
<dbReference type="ExpressionAtlas" id="Q2V352">
    <property type="expression patterns" value="baseline"/>
</dbReference>
<dbReference type="GO" id="GO:0005576">
    <property type="term" value="C:extracellular region"/>
    <property type="evidence" value="ECO:0007669"/>
    <property type="project" value="UniProtKB-SubCell"/>
</dbReference>
<dbReference type="GO" id="GO:0050832">
    <property type="term" value="P:defense response to fungus"/>
    <property type="evidence" value="ECO:0007669"/>
    <property type="project" value="UniProtKB-KW"/>
</dbReference>
<dbReference type="GO" id="GO:0031640">
    <property type="term" value="P:killing of cells of another organism"/>
    <property type="evidence" value="ECO:0007669"/>
    <property type="project" value="UniProtKB-KW"/>
</dbReference>
<dbReference type="InterPro" id="IPR010851">
    <property type="entry name" value="DEFL"/>
</dbReference>
<dbReference type="Pfam" id="PF25052">
    <property type="entry name" value="AtDEF-like"/>
    <property type="match status" value="1"/>
</dbReference>
<name>DF271_ARATH</name>
<comment type="subcellular location">
    <subcellularLocation>
        <location evidence="1">Secreted</location>
    </subcellularLocation>
</comment>
<comment type="similarity">
    <text evidence="3">Belongs to the DEFL family.</text>
</comment>
<protein>
    <recommendedName>
        <fullName>Putative defensin-like protein 271</fullName>
    </recommendedName>
</protein>
<feature type="signal peptide" evidence="2">
    <location>
        <begin position="1"/>
        <end position="23"/>
    </location>
</feature>
<feature type="chain" id="PRO_0000379733" description="Putative defensin-like protein 271">
    <location>
        <begin position="24"/>
        <end position="75"/>
    </location>
</feature>
<feature type="disulfide bond" evidence="1">
    <location>
        <begin position="33"/>
        <end position="72"/>
    </location>
</feature>
<feature type="disulfide bond" evidence="1">
    <location>
        <begin position="39"/>
        <end position="61"/>
    </location>
</feature>
<feature type="disulfide bond" evidence="1">
    <location>
        <begin position="45"/>
        <end position="70"/>
    </location>
</feature>
<feature type="disulfide bond" evidence="1">
    <location>
        <begin position="49"/>
        <end position="71"/>
    </location>
</feature>
<keyword id="KW-0929">Antimicrobial</keyword>
<keyword id="KW-1015">Disulfide bond</keyword>
<keyword id="KW-0295">Fungicide</keyword>
<keyword id="KW-0611">Plant defense</keyword>
<keyword id="KW-1185">Reference proteome</keyword>
<keyword id="KW-0964">Secreted</keyword>
<keyword id="KW-0732">Signal</keyword>
<proteinExistence type="inferred from homology"/>
<reference key="1">
    <citation type="journal article" date="1997" name="DNA Res.">
        <title>Structural analysis of Arabidopsis thaliana chromosome 5. III. Sequence features of the regions of 1,191,918 bp covered by seventeen physically assigned P1 clones.</title>
        <authorList>
            <person name="Nakamura Y."/>
            <person name="Sato S."/>
            <person name="Kaneko T."/>
            <person name="Kotani H."/>
            <person name="Asamizu E."/>
            <person name="Miyajima N."/>
            <person name="Tabata S."/>
        </authorList>
    </citation>
    <scope>NUCLEOTIDE SEQUENCE [LARGE SCALE GENOMIC DNA]</scope>
    <source>
        <strain>cv. Columbia</strain>
    </source>
</reference>
<reference key="2">
    <citation type="journal article" date="2017" name="Plant J.">
        <title>Araport11: a complete reannotation of the Arabidopsis thaliana reference genome.</title>
        <authorList>
            <person name="Cheng C.Y."/>
            <person name="Krishnakumar V."/>
            <person name="Chan A.P."/>
            <person name="Thibaud-Nissen F."/>
            <person name="Schobel S."/>
            <person name="Town C.D."/>
        </authorList>
    </citation>
    <scope>GENOME REANNOTATION</scope>
    <source>
        <strain>cv. Columbia</strain>
    </source>
</reference>
<reference key="3">
    <citation type="journal article" date="2005" name="Plant Physiol.">
        <title>Genome organization of more than 300 defensin-like genes in Arabidopsis.</title>
        <authorList>
            <person name="Silverstein K.A.T."/>
            <person name="Graham M.A."/>
            <person name="Paape T.D."/>
            <person name="VandenBosch K.A."/>
        </authorList>
    </citation>
    <scope>GENE FAMILY</scope>
</reference>
<gene>
    <name type="ordered locus">At5g23212</name>
    <name type="ORF">MKD15</name>
</gene>
<sequence length="75" mass="8264">MTSMKLHIVALCIIVSFLVNVQSTRIMDASSDCEFKGPCHKKEDCYDSCGVNKPPFNNAICVPGRDSFQCCCILS</sequence>
<organism>
    <name type="scientific">Arabidopsis thaliana</name>
    <name type="common">Mouse-ear cress</name>
    <dbReference type="NCBI Taxonomy" id="3702"/>
    <lineage>
        <taxon>Eukaryota</taxon>
        <taxon>Viridiplantae</taxon>
        <taxon>Streptophyta</taxon>
        <taxon>Embryophyta</taxon>
        <taxon>Tracheophyta</taxon>
        <taxon>Spermatophyta</taxon>
        <taxon>Magnoliopsida</taxon>
        <taxon>eudicotyledons</taxon>
        <taxon>Gunneridae</taxon>
        <taxon>Pentapetalae</taxon>
        <taxon>rosids</taxon>
        <taxon>malvids</taxon>
        <taxon>Brassicales</taxon>
        <taxon>Brassicaceae</taxon>
        <taxon>Camelineae</taxon>
        <taxon>Arabidopsis</taxon>
    </lineage>
</organism>
<evidence type="ECO:0000250" key="1"/>
<evidence type="ECO:0000255" key="2"/>
<evidence type="ECO:0000305" key="3"/>
<accession>Q2V352</accession>